<name>YK045_HUMAN</name>
<evidence type="ECO:0000255" key="1"/>
<evidence type="ECO:0000256" key="2">
    <source>
        <dbReference type="SAM" id="MobiDB-lite"/>
    </source>
</evidence>
<evidence type="ECO:0000305" key="3"/>
<sequence>MTERRRALSLAAVVDSINLACVVVSRDWLSLVPAFFYSPPPGGSFSGIKRESRRKRPSRNEIYGGGVLEQEVRMRRWSKTASPPVSLHHRPLGPARKP</sequence>
<protein>
    <recommendedName>
        <fullName>Putative uncharacterized protein LOC644613</fullName>
    </recommendedName>
</protein>
<keyword id="KW-1185">Reference proteome</keyword>
<keyword id="KW-0732">Signal</keyword>
<reference key="1">
    <citation type="journal article" date="2006" name="Nature">
        <title>Human chromosome 11 DNA sequence and analysis including novel gene identification.</title>
        <authorList>
            <person name="Taylor T.D."/>
            <person name="Noguchi H."/>
            <person name="Totoki Y."/>
            <person name="Toyoda A."/>
            <person name="Kuroki Y."/>
            <person name="Dewar K."/>
            <person name="Lloyd C."/>
            <person name="Itoh T."/>
            <person name="Takeda T."/>
            <person name="Kim D.-W."/>
            <person name="She X."/>
            <person name="Barlow K.F."/>
            <person name="Bloom T."/>
            <person name="Bruford E."/>
            <person name="Chang J.L."/>
            <person name="Cuomo C.A."/>
            <person name="Eichler E."/>
            <person name="FitzGerald M.G."/>
            <person name="Jaffe D.B."/>
            <person name="LaButti K."/>
            <person name="Nicol R."/>
            <person name="Park H.-S."/>
            <person name="Seaman C."/>
            <person name="Sougnez C."/>
            <person name="Yang X."/>
            <person name="Zimmer A.R."/>
            <person name="Zody M.C."/>
            <person name="Birren B.W."/>
            <person name="Nusbaum C."/>
            <person name="Fujiyama A."/>
            <person name="Hattori M."/>
            <person name="Rogers J."/>
            <person name="Lander E.S."/>
            <person name="Sakaki Y."/>
        </authorList>
    </citation>
    <scope>NUCLEOTIDE SEQUENCE [LARGE SCALE GENOMIC DNA]</scope>
</reference>
<reference key="2">
    <citation type="journal article" date="2004" name="Genome Res.">
        <title>The status, quality, and expansion of the NIH full-length cDNA project: the Mammalian Gene Collection (MGC).</title>
        <authorList>
            <consortium name="The MGC Project Team"/>
        </authorList>
    </citation>
    <scope>NUCLEOTIDE SEQUENCE [LARGE SCALE MRNA] OF 45-98</scope>
    <source>
        <tissue>Brain</tissue>
    </source>
</reference>
<proteinExistence type="uncertain"/>
<organism>
    <name type="scientific">Homo sapiens</name>
    <name type="common">Human</name>
    <dbReference type="NCBI Taxonomy" id="9606"/>
    <lineage>
        <taxon>Eukaryota</taxon>
        <taxon>Metazoa</taxon>
        <taxon>Chordata</taxon>
        <taxon>Craniata</taxon>
        <taxon>Vertebrata</taxon>
        <taxon>Euteleostomi</taxon>
        <taxon>Mammalia</taxon>
        <taxon>Eutheria</taxon>
        <taxon>Euarchontoglires</taxon>
        <taxon>Primates</taxon>
        <taxon>Haplorrhini</taxon>
        <taxon>Catarrhini</taxon>
        <taxon>Hominidae</taxon>
        <taxon>Homo</taxon>
    </lineage>
</organism>
<feature type="signal peptide" evidence="1">
    <location>
        <begin position="1"/>
        <end position="19"/>
    </location>
</feature>
<feature type="chain" id="PRO_0000348244" description="Putative uncharacterized protein LOC644613">
    <location>
        <begin position="20"/>
        <end position="98"/>
    </location>
</feature>
<feature type="region of interest" description="Disordered" evidence="2">
    <location>
        <begin position="40"/>
        <end position="98"/>
    </location>
</feature>
<feature type="compositionally biased region" description="Basic residues" evidence="2">
    <location>
        <begin position="87"/>
        <end position="98"/>
    </location>
</feature>
<accession>Q8TAT8</accession>
<comment type="caution">
    <text evidence="3">Product of a dubious gene prediction.</text>
</comment>
<comment type="sequence caution" evidence="3">
    <conflict type="miscellaneous discrepancy">
        <sequence resource="EMBL-CDS" id="AAH25792"/>
    </conflict>
    <text>Contaminating sequence. Sequence of unknown origin in the N-terminal part.</text>
</comment>
<dbReference type="EMBL" id="AP001462">
    <property type="status" value="NOT_ANNOTATED_CDS"/>
    <property type="molecule type" value="Genomic_DNA"/>
</dbReference>
<dbReference type="EMBL" id="BC025792">
    <property type="protein sequence ID" value="AAH25792.1"/>
    <property type="status" value="ALT_SEQ"/>
    <property type="molecule type" value="mRNA"/>
</dbReference>
<dbReference type="BioMuta" id="-"/>
<dbReference type="neXtProt" id="NX_Q8TAT8"/>
<dbReference type="InParanoid" id="Q8TAT8"/>
<dbReference type="PAN-GO" id="Q8TAT8">
    <property type="GO annotations" value="0 GO annotations based on evolutionary models"/>
</dbReference>
<dbReference type="Pharos" id="Q8TAT8">
    <property type="development level" value="Tdark"/>
</dbReference>
<dbReference type="Proteomes" id="UP000005640">
    <property type="component" value="Unplaced"/>
</dbReference>
<dbReference type="RNAct" id="Q8TAT8">
    <property type="molecule type" value="protein"/>
</dbReference>